<comment type="function">
    <text evidence="1">Heme chaperone required for the biogenesis of c-type cytochromes. Transiently binds heme delivered by CcmC and transfers the heme to apo-cytochromes in a process facilitated by CcmF and CcmH.</text>
</comment>
<comment type="subcellular location">
    <subcellularLocation>
        <location evidence="1">Cell inner membrane</location>
        <topology evidence="1">Single-pass type II membrane protein</topology>
        <orientation evidence="1">Periplasmic side</orientation>
    </subcellularLocation>
</comment>
<comment type="similarity">
    <text evidence="1">Belongs to the CcmE/CycJ family.</text>
</comment>
<protein>
    <recommendedName>
        <fullName evidence="1">Cytochrome c-type biogenesis protein CcmE</fullName>
    </recommendedName>
    <alternativeName>
        <fullName evidence="1">Cytochrome c maturation protein E</fullName>
    </alternativeName>
    <alternativeName>
        <fullName evidence="1">Heme chaperone CcmE</fullName>
    </alternativeName>
</protein>
<feature type="chain" id="PRO_1000189005" description="Cytochrome c-type biogenesis protein CcmE">
    <location>
        <begin position="1"/>
        <end position="160"/>
    </location>
</feature>
<feature type="topological domain" description="Cytoplasmic" evidence="1">
    <location>
        <begin position="1"/>
        <end position="7"/>
    </location>
</feature>
<feature type="transmembrane region" description="Helical; Signal-anchor for type II membrane protein" evidence="1">
    <location>
        <begin position="8"/>
        <end position="28"/>
    </location>
</feature>
<feature type="topological domain" description="Periplasmic" evidence="1">
    <location>
        <begin position="29"/>
        <end position="160"/>
    </location>
</feature>
<feature type="region of interest" description="Disordered" evidence="2">
    <location>
        <begin position="140"/>
        <end position="160"/>
    </location>
</feature>
<feature type="binding site" description="covalent" evidence="1">
    <location>
        <position position="122"/>
    </location>
    <ligand>
        <name>heme</name>
        <dbReference type="ChEBI" id="CHEBI:30413"/>
    </ligand>
</feature>
<feature type="binding site" description="axial binding residue" evidence="1">
    <location>
        <position position="126"/>
    </location>
    <ligand>
        <name>heme</name>
        <dbReference type="ChEBI" id="CHEBI:30413"/>
    </ligand>
    <ligandPart>
        <name>Fe</name>
        <dbReference type="ChEBI" id="CHEBI:18248"/>
    </ligandPart>
</feature>
<dbReference type="EMBL" id="CP001016">
    <property type="protein sequence ID" value="ACB95849.1"/>
    <property type="molecule type" value="Genomic_DNA"/>
</dbReference>
<dbReference type="RefSeq" id="WP_012385204.1">
    <property type="nucleotide sequence ID" value="NC_010581.1"/>
</dbReference>
<dbReference type="SMR" id="B2IGT8"/>
<dbReference type="STRING" id="395963.Bind_2231"/>
<dbReference type="KEGG" id="bid:Bind_2231"/>
<dbReference type="eggNOG" id="COG2332">
    <property type="taxonomic scope" value="Bacteria"/>
</dbReference>
<dbReference type="HOGENOM" id="CLU_079503_1_1_5"/>
<dbReference type="OrthoDB" id="9793584at2"/>
<dbReference type="Proteomes" id="UP000001695">
    <property type="component" value="Chromosome"/>
</dbReference>
<dbReference type="GO" id="GO:0005886">
    <property type="term" value="C:plasma membrane"/>
    <property type="evidence" value="ECO:0007669"/>
    <property type="project" value="UniProtKB-SubCell"/>
</dbReference>
<dbReference type="GO" id="GO:0020037">
    <property type="term" value="F:heme binding"/>
    <property type="evidence" value="ECO:0007669"/>
    <property type="project" value="InterPro"/>
</dbReference>
<dbReference type="GO" id="GO:0046872">
    <property type="term" value="F:metal ion binding"/>
    <property type="evidence" value="ECO:0007669"/>
    <property type="project" value="UniProtKB-KW"/>
</dbReference>
<dbReference type="GO" id="GO:0017004">
    <property type="term" value="P:cytochrome complex assembly"/>
    <property type="evidence" value="ECO:0007669"/>
    <property type="project" value="UniProtKB-KW"/>
</dbReference>
<dbReference type="FunFam" id="2.40.50.140:FF:000104">
    <property type="entry name" value="Cytochrome c-type biogenesis protein CcmE"/>
    <property type="match status" value="1"/>
</dbReference>
<dbReference type="Gene3D" id="2.40.50.140">
    <property type="entry name" value="Nucleic acid-binding proteins"/>
    <property type="match status" value="1"/>
</dbReference>
<dbReference type="HAMAP" id="MF_01959">
    <property type="entry name" value="CcmE"/>
    <property type="match status" value="1"/>
</dbReference>
<dbReference type="InterPro" id="IPR004329">
    <property type="entry name" value="CcmE"/>
</dbReference>
<dbReference type="InterPro" id="IPR036127">
    <property type="entry name" value="CcmE-like_sf"/>
</dbReference>
<dbReference type="InterPro" id="IPR012340">
    <property type="entry name" value="NA-bd_OB-fold"/>
</dbReference>
<dbReference type="NCBIfam" id="NF009727">
    <property type="entry name" value="PRK13254.1-1"/>
    <property type="match status" value="1"/>
</dbReference>
<dbReference type="NCBIfam" id="NF009729">
    <property type="entry name" value="PRK13254.1-3"/>
    <property type="match status" value="1"/>
</dbReference>
<dbReference type="NCBIfam" id="NF009731">
    <property type="entry name" value="PRK13254.1-5"/>
    <property type="match status" value="1"/>
</dbReference>
<dbReference type="PANTHER" id="PTHR34128">
    <property type="entry name" value="CYTOCHROME C-TYPE BIOGENESIS PROTEIN CCME HOMOLOG, MITOCHONDRIAL"/>
    <property type="match status" value="1"/>
</dbReference>
<dbReference type="PANTHER" id="PTHR34128:SF2">
    <property type="entry name" value="CYTOCHROME C-TYPE BIOGENESIS PROTEIN CCME HOMOLOG, MITOCHONDRIAL"/>
    <property type="match status" value="1"/>
</dbReference>
<dbReference type="Pfam" id="PF03100">
    <property type="entry name" value="CcmE"/>
    <property type="match status" value="1"/>
</dbReference>
<dbReference type="SUPFAM" id="SSF82093">
    <property type="entry name" value="Heme chaperone CcmE"/>
    <property type="match status" value="1"/>
</dbReference>
<proteinExistence type="inferred from homology"/>
<sequence length="160" mass="17366">MTRKQRRLFMIFGALGTLGVAVGLILFALSDNIVFFYGPTELAEKAPHPGARLRIGGLVKPGSLEREAGQTVHFIVTDNKHDVAVTYTGLLPDLFREGQGVVTEGTLTGKETLRADSVLAKHDERYMPREVADALKKQGVWQEDGQAKPATQGAAAPLIR</sequence>
<accession>B2IGT8</accession>
<gene>
    <name evidence="1" type="primary">ccmE</name>
    <name evidence="1" type="synonym">cycJ</name>
    <name type="ordered locus">Bind_2231</name>
</gene>
<name>CCME_BEII9</name>
<organism>
    <name type="scientific">Beijerinckia indica subsp. indica (strain ATCC 9039 / DSM 1715 / NCIMB 8712)</name>
    <dbReference type="NCBI Taxonomy" id="395963"/>
    <lineage>
        <taxon>Bacteria</taxon>
        <taxon>Pseudomonadati</taxon>
        <taxon>Pseudomonadota</taxon>
        <taxon>Alphaproteobacteria</taxon>
        <taxon>Hyphomicrobiales</taxon>
        <taxon>Beijerinckiaceae</taxon>
        <taxon>Beijerinckia</taxon>
    </lineage>
</organism>
<reference key="1">
    <citation type="journal article" date="2010" name="J. Bacteriol.">
        <title>Complete genome sequence of Beijerinckia indica subsp. indica.</title>
        <authorList>
            <person name="Tamas I."/>
            <person name="Dedysh S.N."/>
            <person name="Liesack W."/>
            <person name="Stott M.B."/>
            <person name="Alam M."/>
            <person name="Murrell J.C."/>
            <person name="Dunfield P.F."/>
        </authorList>
    </citation>
    <scope>NUCLEOTIDE SEQUENCE [LARGE SCALE GENOMIC DNA]</scope>
    <source>
        <strain>ATCC 9039 / DSM 1715 / NCIMB 8712</strain>
    </source>
</reference>
<keyword id="KW-0997">Cell inner membrane</keyword>
<keyword id="KW-1003">Cell membrane</keyword>
<keyword id="KW-0201">Cytochrome c-type biogenesis</keyword>
<keyword id="KW-0349">Heme</keyword>
<keyword id="KW-0408">Iron</keyword>
<keyword id="KW-0472">Membrane</keyword>
<keyword id="KW-0479">Metal-binding</keyword>
<keyword id="KW-1185">Reference proteome</keyword>
<keyword id="KW-0735">Signal-anchor</keyword>
<keyword id="KW-0812">Transmembrane</keyword>
<keyword id="KW-1133">Transmembrane helix</keyword>
<evidence type="ECO:0000255" key="1">
    <source>
        <dbReference type="HAMAP-Rule" id="MF_01959"/>
    </source>
</evidence>
<evidence type="ECO:0000256" key="2">
    <source>
        <dbReference type="SAM" id="MobiDB-lite"/>
    </source>
</evidence>